<feature type="chain" id="PRO_0000322963" description="Recombination protein RecR">
    <location>
        <begin position="1"/>
        <end position="215"/>
    </location>
</feature>
<feature type="domain" description="Toprim" evidence="1">
    <location>
        <begin position="97"/>
        <end position="191"/>
    </location>
</feature>
<feature type="zinc finger region" description="C4-type" evidence="1">
    <location>
        <begin position="74"/>
        <end position="89"/>
    </location>
</feature>
<reference key="1">
    <citation type="submission" date="2006-05" db="EMBL/GenBank/DDBJ databases">
        <authorList>
            <consortium name="Genoscope"/>
        </authorList>
    </citation>
    <scope>NUCLEOTIDE SEQUENCE [LARGE SCALE GENOMIC DNA]</scope>
    <source>
        <strain>RCC307</strain>
    </source>
</reference>
<sequence>MWRDDLPRFQPSHCRPLTVFTRPLARLIEQFERLPGIGPRTAQRLALHLLRQPEEQSRAFADALLAARQQVGQCQRCGHLSADPICDICRNPERNIGVICVVADSRDLLALERTREFSGSYHVLGGLISPMDGIGPEALGIQPLLQRLDPEQVEEVILALTPSVEGDTTSLYLARLLKPFCRVTRIAYGLPVGSELEYADDVTLARALEGRRIVE</sequence>
<keyword id="KW-0227">DNA damage</keyword>
<keyword id="KW-0233">DNA recombination</keyword>
<keyword id="KW-0234">DNA repair</keyword>
<keyword id="KW-0479">Metal-binding</keyword>
<keyword id="KW-1185">Reference proteome</keyword>
<keyword id="KW-0862">Zinc</keyword>
<keyword id="KW-0863">Zinc-finger</keyword>
<organism>
    <name type="scientific">Synechococcus sp. (strain RCC307)</name>
    <dbReference type="NCBI Taxonomy" id="316278"/>
    <lineage>
        <taxon>Bacteria</taxon>
        <taxon>Bacillati</taxon>
        <taxon>Cyanobacteriota</taxon>
        <taxon>Cyanophyceae</taxon>
        <taxon>Synechococcales</taxon>
        <taxon>Synechococcaceae</taxon>
        <taxon>Synechococcus</taxon>
    </lineage>
</organism>
<proteinExistence type="inferred from homology"/>
<name>RECR_SYNR3</name>
<evidence type="ECO:0000255" key="1">
    <source>
        <dbReference type="HAMAP-Rule" id="MF_00017"/>
    </source>
</evidence>
<gene>
    <name evidence="1" type="primary">recR</name>
    <name type="ordered locus">SynRCC307_0801</name>
</gene>
<protein>
    <recommendedName>
        <fullName evidence="1">Recombination protein RecR</fullName>
    </recommendedName>
</protein>
<dbReference type="EMBL" id="CT978603">
    <property type="protein sequence ID" value="CAK27704.1"/>
    <property type="molecule type" value="Genomic_DNA"/>
</dbReference>
<dbReference type="SMR" id="A5GS45"/>
<dbReference type="STRING" id="316278.SynRCC307_0801"/>
<dbReference type="KEGG" id="syr:SynRCC307_0801"/>
<dbReference type="eggNOG" id="COG0353">
    <property type="taxonomic scope" value="Bacteria"/>
</dbReference>
<dbReference type="HOGENOM" id="CLU_060739_1_0_3"/>
<dbReference type="Proteomes" id="UP000001115">
    <property type="component" value="Chromosome"/>
</dbReference>
<dbReference type="GO" id="GO:0003677">
    <property type="term" value="F:DNA binding"/>
    <property type="evidence" value="ECO:0007669"/>
    <property type="project" value="UniProtKB-UniRule"/>
</dbReference>
<dbReference type="GO" id="GO:0008270">
    <property type="term" value="F:zinc ion binding"/>
    <property type="evidence" value="ECO:0007669"/>
    <property type="project" value="UniProtKB-KW"/>
</dbReference>
<dbReference type="GO" id="GO:0006310">
    <property type="term" value="P:DNA recombination"/>
    <property type="evidence" value="ECO:0007669"/>
    <property type="project" value="UniProtKB-UniRule"/>
</dbReference>
<dbReference type="GO" id="GO:0006281">
    <property type="term" value="P:DNA repair"/>
    <property type="evidence" value="ECO:0007669"/>
    <property type="project" value="UniProtKB-UniRule"/>
</dbReference>
<dbReference type="CDD" id="cd01025">
    <property type="entry name" value="TOPRIM_recR"/>
    <property type="match status" value="1"/>
</dbReference>
<dbReference type="Gene3D" id="3.40.1360.10">
    <property type="match status" value="1"/>
</dbReference>
<dbReference type="Gene3D" id="6.10.250.240">
    <property type="match status" value="1"/>
</dbReference>
<dbReference type="Gene3D" id="1.10.8.420">
    <property type="entry name" value="RecR Domain 1"/>
    <property type="match status" value="1"/>
</dbReference>
<dbReference type="HAMAP" id="MF_00017">
    <property type="entry name" value="RecR"/>
    <property type="match status" value="1"/>
</dbReference>
<dbReference type="InterPro" id="IPR000093">
    <property type="entry name" value="DNA_Rcmb_RecR"/>
</dbReference>
<dbReference type="InterPro" id="IPR023627">
    <property type="entry name" value="Rcmb_RecR"/>
</dbReference>
<dbReference type="InterPro" id="IPR015967">
    <property type="entry name" value="Rcmb_RecR_Znf"/>
</dbReference>
<dbReference type="InterPro" id="IPR006171">
    <property type="entry name" value="TOPRIM_dom"/>
</dbReference>
<dbReference type="InterPro" id="IPR034137">
    <property type="entry name" value="TOPRIM_RecR"/>
</dbReference>
<dbReference type="NCBIfam" id="TIGR00615">
    <property type="entry name" value="recR"/>
    <property type="match status" value="1"/>
</dbReference>
<dbReference type="PANTHER" id="PTHR30446">
    <property type="entry name" value="RECOMBINATION PROTEIN RECR"/>
    <property type="match status" value="1"/>
</dbReference>
<dbReference type="PANTHER" id="PTHR30446:SF0">
    <property type="entry name" value="RECOMBINATION PROTEIN RECR"/>
    <property type="match status" value="1"/>
</dbReference>
<dbReference type="Pfam" id="PF21175">
    <property type="entry name" value="RecR_C"/>
    <property type="match status" value="1"/>
</dbReference>
<dbReference type="Pfam" id="PF21176">
    <property type="entry name" value="RecR_HhH"/>
    <property type="match status" value="1"/>
</dbReference>
<dbReference type="Pfam" id="PF02132">
    <property type="entry name" value="RecR_ZnF"/>
    <property type="match status" value="1"/>
</dbReference>
<dbReference type="Pfam" id="PF13662">
    <property type="entry name" value="Toprim_4"/>
    <property type="match status" value="1"/>
</dbReference>
<dbReference type="SMART" id="SM00493">
    <property type="entry name" value="TOPRIM"/>
    <property type="match status" value="1"/>
</dbReference>
<dbReference type="SUPFAM" id="SSF111304">
    <property type="entry name" value="Recombination protein RecR"/>
    <property type="match status" value="1"/>
</dbReference>
<dbReference type="PROSITE" id="PS01300">
    <property type="entry name" value="RECR"/>
    <property type="match status" value="1"/>
</dbReference>
<dbReference type="PROSITE" id="PS50880">
    <property type="entry name" value="TOPRIM"/>
    <property type="match status" value="1"/>
</dbReference>
<accession>A5GS45</accession>
<comment type="function">
    <text evidence="1">May play a role in DNA repair. It seems to be involved in an RecBC-independent recombinational process of DNA repair. It may act with RecF and RecO.</text>
</comment>
<comment type="similarity">
    <text evidence="1">Belongs to the RecR family.</text>
</comment>